<organismHost>
    <name type="scientific">Spiroplasma melliferum</name>
    <dbReference type="NCBI Taxonomy" id="2134"/>
</organismHost>
<comment type="function">
    <text>This protein may encode an integrase, which is necessary for integration of the viral DNA into host genome.</text>
</comment>
<comment type="similarity">
    <text evidence="2">Belongs to the plectrovirus integrase ORF3 family.</text>
</comment>
<organism>
    <name type="scientific">Spiroplasma virus SpV1-C74</name>
    <name type="common">SpV1</name>
    <dbReference type="NCBI Taxonomy" id="185959"/>
    <lineage>
        <taxon>Viruses</taxon>
        <taxon>Monodnaviria</taxon>
        <taxon>Loebvirae</taxon>
        <taxon>Hofneiviricota</taxon>
        <taxon>Faserviricetes</taxon>
        <taxon>Tubulavirales</taxon>
        <taxon>Plectroviridae</taxon>
        <taxon>Vespertiliovirus</taxon>
        <taxon>Vespertiliovirus C74</taxon>
    </lineage>
</organism>
<name>INTG_SPV1C</name>
<accession>Q88419</accession>
<feature type="chain" id="PRO_0000372069" description="Putative integrase ORF3">
    <location>
        <begin position="1"/>
        <end position="362"/>
    </location>
</feature>
<feature type="domain" description="Integrase catalytic" evidence="1">
    <location>
        <begin position="179"/>
        <end position="359"/>
    </location>
</feature>
<feature type="binding site" evidence="1">
    <location>
        <position position="190"/>
    </location>
    <ligand>
        <name>Mg(2+)</name>
        <dbReference type="ChEBI" id="CHEBI:18420"/>
        <note>catalytic</note>
    </ligand>
</feature>
<feature type="binding site" evidence="1">
    <location>
        <position position="256"/>
    </location>
    <ligand>
        <name>Mg(2+)</name>
        <dbReference type="ChEBI" id="CHEBI:18420"/>
        <note>catalytic</note>
    </ligand>
</feature>
<reference key="1">
    <citation type="journal article" date="1996" name="Curr. Microbiol.">
        <title>Spiroplasma citri Virus SpV1: Characterization of viral sequences present in the spiroplasmal host chromosome.</title>
        <authorList>
            <person name="Bebear C.M."/>
            <person name="Aullo P."/>
            <person name="Bove J."/>
            <person name="Renaudin J."/>
        </authorList>
    </citation>
    <scope>NUCLEOTIDE SEQUENCE [GENOMIC DNA]</scope>
</reference>
<protein>
    <recommendedName>
        <fullName>Putative integrase ORF3</fullName>
    </recommendedName>
</protein>
<proteinExistence type="inferred from homology"/>
<gene>
    <name type="ORF">ORF3</name>
</gene>
<dbReference type="EMBL" id="U28974">
    <property type="protein sequence ID" value="AAA85012.1"/>
    <property type="molecule type" value="Genomic_DNA"/>
</dbReference>
<dbReference type="RefSeq" id="NP_620626.1">
    <property type="nucleotide sequence ID" value="NC_003793.1"/>
</dbReference>
<dbReference type="KEGG" id="vg:944351"/>
<dbReference type="OrthoDB" id="3446at10239"/>
<dbReference type="Proteomes" id="UP000001764">
    <property type="component" value="Genome"/>
</dbReference>
<dbReference type="GO" id="GO:0004519">
    <property type="term" value="F:endonuclease activity"/>
    <property type="evidence" value="ECO:0007669"/>
    <property type="project" value="UniProtKB-KW"/>
</dbReference>
<dbReference type="GO" id="GO:0046872">
    <property type="term" value="F:metal ion binding"/>
    <property type="evidence" value="ECO:0007669"/>
    <property type="project" value="UniProtKB-KW"/>
</dbReference>
<dbReference type="GO" id="GO:0003676">
    <property type="term" value="F:nucleic acid binding"/>
    <property type="evidence" value="ECO:0007669"/>
    <property type="project" value="InterPro"/>
</dbReference>
<dbReference type="GO" id="GO:0015074">
    <property type="term" value="P:DNA integration"/>
    <property type="evidence" value="ECO:0007669"/>
    <property type="project" value="UniProtKB-KW"/>
</dbReference>
<dbReference type="GO" id="GO:0006310">
    <property type="term" value="P:DNA recombination"/>
    <property type="evidence" value="ECO:0007669"/>
    <property type="project" value="UniProtKB-KW"/>
</dbReference>
<dbReference type="Gene3D" id="3.30.420.10">
    <property type="entry name" value="Ribonuclease H-like superfamily/Ribonuclease H"/>
    <property type="match status" value="1"/>
</dbReference>
<dbReference type="InterPro" id="IPR001584">
    <property type="entry name" value="Integrase_cat-core"/>
</dbReference>
<dbReference type="InterPro" id="IPR039537">
    <property type="entry name" value="Retrotran_Ty1/copia-like"/>
</dbReference>
<dbReference type="InterPro" id="IPR012337">
    <property type="entry name" value="RNaseH-like_sf"/>
</dbReference>
<dbReference type="InterPro" id="IPR036397">
    <property type="entry name" value="RNaseH_sf"/>
</dbReference>
<dbReference type="PANTHER" id="PTHR42648">
    <property type="entry name" value="TRANSPOSASE, PUTATIVE-RELATED"/>
    <property type="match status" value="1"/>
</dbReference>
<dbReference type="PANTHER" id="PTHR42648:SF11">
    <property type="entry name" value="TRANSPOSON TY4-P GAG-POL POLYPROTEIN"/>
    <property type="match status" value="1"/>
</dbReference>
<dbReference type="Pfam" id="PF00665">
    <property type="entry name" value="rve"/>
    <property type="match status" value="1"/>
</dbReference>
<dbReference type="SUPFAM" id="SSF53098">
    <property type="entry name" value="Ribonuclease H-like"/>
    <property type="match status" value="1"/>
</dbReference>
<dbReference type="PROSITE" id="PS50994">
    <property type="entry name" value="INTEGRASE"/>
    <property type="match status" value="1"/>
</dbReference>
<sequence length="362" mass="43540">MKYIINNFNLFDLQAKLKNFLSKNYKNKYYKRIKQKIFSYINLCNDYYNGNFLLKDLIKKYFKNKFSTFYYWANKILIAYKSNDFAELLLKSTIPNNINYQYSNDVRQNICDLYFKYCNKHAGGVLSLFYNLKKGIHGEELKNKAPKNLKTFFRWLKKDERWLKIKNKIKEIKKQHSRYEVKEIGLLQMDAKYFVPSKFSVDKKYYVYDFIDEKTRLALGYVYDKLSTDNAIDAVKKAISDFKNIFGIIITRIRTDNGSEFINNYRNNQKISVKKTNFTQFLTDKNILHQTTPVRSPQSNGKIERFHQNYTKLFVFEEKILNAVSLQNKLNDYYYFYNFERVHKSLNFQTPFNFLNSLSLIK</sequence>
<evidence type="ECO:0000255" key="1">
    <source>
        <dbReference type="PROSITE-ProRule" id="PRU00457"/>
    </source>
</evidence>
<evidence type="ECO:0000305" key="2"/>
<keyword id="KW-0229">DNA integration</keyword>
<keyword id="KW-0233">DNA recombination</keyword>
<keyword id="KW-0255">Endonuclease</keyword>
<keyword id="KW-0378">Hydrolase</keyword>
<keyword id="KW-0460">Magnesium</keyword>
<keyword id="KW-0479">Metal-binding</keyword>
<keyword id="KW-0540">Nuclease</keyword>
<keyword id="KW-1185">Reference proteome</keyword>